<protein>
    <recommendedName>
        <fullName>ATP synthase protein MI25</fullName>
    </recommendedName>
    <alternativeName>
        <fullName>ORF25</fullName>
    </alternativeName>
</protein>
<gene>
    <name type="primary">ATP4</name>
    <name type="ordered locus">AtMg00640</name>
</gene>
<reference key="1">
    <citation type="journal article" date="1992" name="Mol. Gen. Genet.">
        <title>The nad4L gene is encoded between exon c of nad5 and orf25 in the Arabidopsis mitochondrial genome.</title>
        <authorList>
            <person name="Brandt P."/>
            <person name="Sunkel S."/>
            <person name="Unseld M."/>
            <person name="Brennicke A."/>
            <person name="Knoop V."/>
        </authorList>
    </citation>
    <scope>NUCLEOTIDE SEQUENCE [GENOMIC DNA]</scope>
</reference>
<reference key="2">
    <citation type="journal article" date="1997" name="Nat. Genet.">
        <title>The mitochondrial genome of Arabidopsis thaliana contains 57 genes in 366,924 nucleotides.</title>
        <authorList>
            <person name="Unseld M."/>
            <person name="Marienfeld J.R."/>
            <person name="Brandt P."/>
            <person name="Brennicke A."/>
        </authorList>
    </citation>
    <scope>NUCLEOTIDE SEQUENCE [LARGE SCALE GENOMIC DNA]</scope>
    <source>
        <strain>cv. C24</strain>
    </source>
</reference>
<reference key="3">
    <citation type="journal article" date="1999" name="Proc. Natl. Acad. Sci. U.S.A.">
        <title>RNA editing in Arabidopsis mitochondria effects 441 C to U changes in ORFs.</title>
        <authorList>
            <person name="Giege P."/>
            <person name="Brennicke A."/>
        </authorList>
    </citation>
    <scope>NUCLEOTIDE SEQUENCE [GENOMIC DNA]</scope>
    <scope>RNA EDITING</scope>
</reference>
<reference key="4">
    <citation type="journal article" date="2018" name="Plant Cell">
        <title>Correction of persistent errors in Arabidopsis reference mitochondrial genomes.</title>
        <authorList>
            <person name="Sloan D.B."/>
            <person name="Wu Z."/>
            <person name="Sharbrough J."/>
        </authorList>
    </citation>
    <scope>NUCLEOTIDE SEQUENCE [LARGE SCALE GENOMIC DNA]</scope>
    <scope>RNA EDITING</scope>
    <source>
        <strain>cv. Columbia</strain>
    </source>
</reference>
<reference key="5">
    <citation type="journal article" date="2008" name="Genetics">
        <title>Genetic architecture of mitochondrial editing in Arabidopsis thaliana.</title>
        <authorList>
            <person name="Bentolila S."/>
            <person name="Elliott L.E."/>
            <person name="Hanson M.R."/>
        </authorList>
    </citation>
    <scope>NUCLEOTIDE SEQUENCE [MRNA] OF 15-182</scope>
    <scope>RNA EDITING</scope>
    <source>
        <strain>cv. Columbia</strain>
        <strain>cv. Landsberg erecta</strain>
        <tissue>Rosette leaf</tissue>
    </source>
</reference>
<reference key="6">
    <citation type="journal article" date="2003" name="FEBS Lett.">
        <title>The products of the mitochondrial orf25 and orfB genes are F(0) components in the plant F(1)F(0) ATP synthase.</title>
        <authorList>
            <person name="Heazlewood J.L."/>
            <person name="Whelan J."/>
            <person name="Millar A.H."/>
        </authorList>
    </citation>
    <scope>IDENTIFICATION BY MASS SPECTROMETRY</scope>
    <scope>SUBUNIT</scope>
</reference>
<reference key="7">
    <citation type="journal article" date="2004" name="Plant Cell">
        <title>Experimental analysis of the Arabidopsis mitochondrial proteome highlights signaling and regulatory components, provides assessment of targeting prediction programs, and indicates plant-specific mitochondrial proteins.</title>
        <authorList>
            <person name="Heazlewood J.L."/>
            <person name="Tonti-Filippini J.S."/>
            <person name="Gout A.M."/>
            <person name="Day D.A."/>
            <person name="Whelan J."/>
            <person name="Millar A.H."/>
        </authorList>
    </citation>
    <scope>IDENTIFICATION BY MASS SPECTROMETRY</scope>
    <scope>SUBCELLULAR LOCATION [LARGE SCALE ANALYSIS]</scope>
    <source>
        <strain>cv. Landsberg erecta</strain>
    </source>
</reference>
<organism>
    <name type="scientific">Arabidopsis thaliana</name>
    <name type="common">Mouse-ear cress</name>
    <dbReference type="NCBI Taxonomy" id="3702"/>
    <lineage>
        <taxon>Eukaryota</taxon>
        <taxon>Viridiplantae</taxon>
        <taxon>Streptophyta</taxon>
        <taxon>Embryophyta</taxon>
        <taxon>Tracheophyta</taxon>
        <taxon>Spermatophyta</taxon>
        <taxon>Magnoliopsida</taxon>
        <taxon>eudicotyledons</taxon>
        <taxon>Gunneridae</taxon>
        <taxon>Pentapetalae</taxon>
        <taxon>rosids</taxon>
        <taxon>malvids</taxon>
        <taxon>Brassicales</taxon>
        <taxon>Brassicaceae</taxon>
        <taxon>Camelineae</taxon>
        <taxon>Arabidopsis</taxon>
    </lineage>
</organism>
<sequence>MRLSSTNMDARKMLFAAILSICALSSKKILIYNEEMIVALCFIGFIIFSRKSLGTTFKVTLDGRIQAIQEELQQFPNPNEVVLLESNEQQRLLRISLRICGTVVESLPMARCAPKCEKTVQALLCRNLNVKLATLTNAISSRRIRFQDDLVTKFYTLVGKQFAYSCISKAERVEFIRESLVVLRMVRGGGFS</sequence>
<dbReference type="EMBL" id="X67105">
    <property type="protein sequence ID" value="CAA47480.1"/>
    <property type="status" value="ALT_SEQ"/>
    <property type="molecule type" value="Genomic_DNA"/>
</dbReference>
<dbReference type="EMBL" id="Y08501">
    <property type="protein sequence ID" value="CAA69748.3"/>
    <property type="status" value="ALT_SEQ"/>
    <property type="molecule type" value="Genomic_DNA"/>
</dbReference>
<dbReference type="EMBL" id="BK010421">
    <property type="protein sequence ID" value="DAB41524.2"/>
    <property type="molecule type" value="Genomic_DNA"/>
</dbReference>
<dbReference type="EMBL" id="EF488928">
    <property type="protein sequence ID" value="ABS50640.1"/>
    <property type="molecule type" value="mRNA"/>
</dbReference>
<dbReference type="EMBL" id="EF488929">
    <property type="protein sequence ID" value="ABS50641.1"/>
    <property type="molecule type" value="mRNA"/>
</dbReference>
<dbReference type="PIR" id="S34401">
    <property type="entry name" value="S34401"/>
</dbReference>
<dbReference type="RefSeq" id="NP_085524.1">
    <property type="nucleotide sequence ID" value="NC_001284.2"/>
</dbReference>
<dbReference type="SMR" id="Q04613"/>
<dbReference type="FunCoup" id="Q04613">
    <property type="interactions" value="14"/>
</dbReference>
<dbReference type="IntAct" id="Q04613">
    <property type="interactions" value="2"/>
</dbReference>
<dbReference type="STRING" id="3702.A0A2P2CLH9"/>
<dbReference type="PaxDb" id="3702-ATMG00640.1"/>
<dbReference type="ProteomicsDB" id="250849"/>
<dbReference type="Araport" id="ATMG00640"/>
<dbReference type="TAIR" id="ATMG00640"/>
<dbReference type="eggNOG" id="ENOG502RFCF">
    <property type="taxonomic scope" value="Eukaryota"/>
</dbReference>
<dbReference type="HOGENOM" id="CLU_123596_0_0_1"/>
<dbReference type="InParanoid" id="Q04613"/>
<dbReference type="PRO" id="PR:Q04613"/>
<dbReference type="Proteomes" id="UP000006548">
    <property type="component" value="Mitochondrion MT"/>
</dbReference>
<dbReference type="ExpressionAtlas" id="Q04613">
    <property type="expression patterns" value="baseline and differential"/>
</dbReference>
<dbReference type="GO" id="GO:0031966">
    <property type="term" value="C:mitochondrial membrane"/>
    <property type="evidence" value="ECO:0007669"/>
    <property type="project" value="UniProtKB-SubCell"/>
</dbReference>
<dbReference type="GO" id="GO:0045259">
    <property type="term" value="C:proton-transporting ATP synthase complex"/>
    <property type="evidence" value="ECO:0007669"/>
    <property type="project" value="UniProtKB-KW"/>
</dbReference>
<dbReference type="GO" id="GO:0015078">
    <property type="term" value="F:proton transmembrane transporter activity"/>
    <property type="evidence" value="ECO:0007669"/>
    <property type="project" value="InterPro"/>
</dbReference>
<dbReference type="GO" id="GO:0015986">
    <property type="term" value="P:proton motive force-driven ATP synthesis"/>
    <property type="evidence" value="ECO:0007669"/>
    <property type="project" value="InterPro"/>
</dbReference>
<dbReference type="InterPro" id="IPR008688">
    <property type="entry name" value="ATP_synth_Bsub_B/MI25"/>
</dbReference>
<dbReference type="InterPro" id="IPR044988">
    <property type="entry name" value="MI25_plants"/>
</dbReference>
<dbReference type="PANTHER" id="PTHR37774:SF4">
    <property type="entry name" value="ATP SYNTHASE PROTEIN MI25"/>
    <property type="match status" value="1"/>
</dbReference>
<dbReference type="PANTHER" id="PTHR37774">
    <property type="entry name" value="ATP SYNTHASE PROTEIN MI25-RELATED"/>
    <property type="match status" value="1"/>
</dbReference>
<dbReference type="Pfam" id="PF05405">
    <property type="entry name" value="Mt_ATP-synt_B"/>
    <property type="match status" value="1"/>
</dbReference>
<comment type="function">
    <text>This is one of the chains of the nonenzymatic component (CF(0) subunit) of the mitochondrial ATPase complex.</text>
</comment>
<comment type="subunit">
    <text evidence="1">F-type ATPases have 2 components, CF(1) - the catalytic core - and CF(0) - the membrane proton channel. CF(1) has five subunits: alpha(3), beta(3), gamma(1), delta(1), epsilon(1). CF(0) has three main subunits: a, b and c (By similarity).</text>
</comment>
<comment type="subcellular location">
    <subcellularLocation>
        <location evidence="4">Mitochondrion membrane</location>
        <topology evidence="4">Single-pass membrane protein</topology>
    </subcellularLocation>
</comment>
<comment type="RNA editing">
    <location>
        <position position="30" evidence="3 5 6"/>
    </location>
    <location>
        <position position="72" evidence="3 5 6"/>
    </location>
    <location>
        <position position="83" evidence="3 5 6"/>
    </location>
    <location>
        <position position="84" evidence="3 5 6"/>
    </location>
    <location>
        <position position="132" evidence="3 5 6"/>
    </location>
    <location>
        <position position="139" evidence="3 5 6"/>
    </location>
</comment>
<comment type="similarity">
    <text evidence="7">Belongs to the ATPase protein MI25 family.</text>
</comment>
<name>MI25_ARATH</name>
<accession>Q04613</accession>
<accession>A0A2P2CLH9</accession>
<accession>A7KNI5</accession>
<keyword id="KW-0066">ATP synthesis</keyword>
<keyword id="KW-0138">CF(0)</keyword>
<keyword id="KW-0375">Hydrogen ion transport</keyword>
<keyword id="KW-0406">Ion transport</keyword>
<keyword id="KW-0472">Membrane</keyword>
<keyword id="KW-0496">Mitochondrion</keyword>
<keyword id="KW-1185">Reference proteome</keyword>
<keyword id="KW-0691">RNA editing</keyword>
<keyword id="KW-0812">Transmembrane</keyword>
<keyword id="KW-1133">Transmembrane helix</keyword>
<keyword id="KW-0813">Transport</keyword>
<geneLocation type="mitochondrion"/>
<proteinExistence type="evidence at protein level"/>
<evidence type="ECO:0000250" key="1"/>
<evidence type="ECO:0000255" key="2"/>
<evidence type="ECO:0000269" key="3">
    <source>
    </source>
</evidence>
<evidence type="ECO:0000269" key="4">
    <source>
    </source>
</evidence>
<evidence type="ECO:0000269" key="5">
    <source>
    </source>
</evidence>
<evidence type="ECO:0000269" key="6">
    <source>
    </source>
</evidence>
<evidence type="ECO:0000305" key="7"/>
<feature type="chain" id="PRO_0000096473" description="ATP synthase protein MI25">
    <location>
        <begin position="1"/>
        <end position="192"/>
    </location>
</feature>
<feature type="transmembrane region" description="Helical" evidence="2">
    <location>
        <begin position="29"/>
        <end position="49"/>
    </location>
</feature>
<feature type="sequence conflict" description="In Ref. 1; CAA47480 and 2; CAA69748." evidence="7" ref="1 2">
    <original>S</original>
    <variation>I</variation>
    <location>
        <position position="5"/>
    </location>
</feature>
<feature type="sequence conflict" description="In Ref. 1; CAA47480 and 2; CAA69748." evidence="7" ref="1 2">
    <original>A</original>
    <variation>G</variation>
    <location>
        <position position="10"/>
    </location>
</feature>
<feature type="sequence conflict" description="In Ref. 1; CAA47480 and 2; CAA69748." evidence="7" ref="1 2">
    <original>RI</original>
    <variation>SL</variation>
    <location>
        <begin position="64"/>
        <end position="65"/>
    </location>
</feature>
<feature type="sequence conflict" description="In Ref. 1; CAA47480 and 2; CAA69748." evidence="7" ref="1 2">
    <original>G</original>
    <variation>V</variation>
    <location>
        <position position="190"/>
    </location>
</feature>